<organism>
    <name type="scientific">Mycobacterium tuberculosis (strain ATCC 25618 / H37Rv)</name>
    <dbReference type="NCBI Taxonomy" id="83332"/>
    <lineage>
        <taxon>Bacteria</taxon>
        <taxon>Bacillati</taxon>
        <taxon>Actinomycetota</taxon>
        <taxon>Actinomycetes</taxon>
        <taxon>Mycobacteriales</taxon>
        <taxon>Mycobacteriaceae</taxon>
        <taxon>Mycobacterium</taxon>
        <taxon>Mycobacterium tuberculosis complex</taxon>
    </lineage>
</organism>
<feature type="chain" id="PRO_0000420590" description="Decaprenylphosphoryl-5-phosphoribose phosphatase">
    <location>
        <begin position="1"/>
        <end position="177"/>
    </location>
</feature>
<feature type="transmembrane region" description="Helical" evidence="2">
    <location>
        <begin position="35"/>
        <end position="55"/>
    </location>
</feature>
<feature type="transmembrane region" description="Helical" evidence="2">
    <location>
        <begin position="62"/>
        <end position="82"/>
    </location>
</feature>
<feature type="transmembrane region" description="Helical" evidence="2">
    <location>
        <begin position="124"/>
        <end position="144"/>
    </location>
</feature>
<feature type="transmembrane region" description="Helical" evidence="2">
    <location>
        <begin position="150"/>
        <end position="170"/>
    </location>
</feature>
<evidence type="ECO:0000250" key="1">
    <source>
        <dbReference type="UniProtKB" id="A0R627"/>
    </source>
</evidence>
<evidence type="ECO:0000255" key="2"/>
<evidence type="ECO:0000269" key="3">
    <source>
    </source>
</evidence>
<evidence type="ECO:0000269" key="4">
    <source>
    </source>
</evidence>
<evidence type="ECO:0000303" key="5">
    <source>
    </source>
</evidence>
<evidence type="ECO:0000305" key="6"/>
<dbReference type="EC" id="3.1.3.111" evidence="1"/>
<dbReference type="EMBL" id="AL123456">
    <property type="protein sequence ID" value="CCP46636.1"/>
    <property type="status" value="ALT_INIT"/>
    <property type="molecule type" value="Genomic_DNA"/>
</dbReference>
<dbReference type="PIR" id="C70888">
    <property type="entry name" value="C70888"/>
</dbReference>
<dbReference type="RefSeq" id="NP_218324.1">
    <property type="nucleotide sequence ID" value="NC_000962.3"/>
</dbReference>
<dbReference type="RefSeq" id="WP_003420792.1">
    <property type="nucleotide sequence ID" value="NC_000962.3"/>
</dbReference>
<dbReference type="RefSeq" id="WP_003899705.1">
    <property type="nucleotide sequence ID" value="NZ_NVQJ01000022.1"/>
</dbReference>
<dbReference type="SMR" id="P9WI53"/>
<dbReference type="FunCoup" id="P9WI53">
    <property type="interactions" value="4"/>
</dbReference>
<dbReference type="STRING" id="83332.Rv3807c"/>
<dbReference type="PaxDb" id="83332-Rv3807c"/>
<dbReference type="DNASU" id="886134"/>
<dbReference type="GeneID" id="886134"/>
<dbReference type="KEGG" id="mtu:Rv3807c"/>
<dbReference type="PATRIC" id="fig|83332.111.peg.4232"/>
<dbReference type="TubercuList" id="Rv3807c"/>
<dbReference type="eggNOG" id="COG0671">
    <property type="taxonomic scope" value="Bacteria"/>
</dbReference>
<dbReference type="InParanoid" id="P9WI53"/>
<dbReference type="PhylomeDB" id="P9WI53"/>
<dbReference type="BioCyc" id="MetaCyc:G185E-8103-MONOMER"/>
<dbReference type="UniPathway" id="UPA00963"/>
<dbReference type="Proteomes" id="UP000001584">
    <property type="component" value="Chromosome"/>
</dbReference>
<dbReference type="GO" id="GO:0005886">
    <property type="term" value="C:plasma membrane"/>
    <property type="evidence" value="ECO:0007669"/>
    <property type="project" value="UniProtKB-SubCell"/>
</dbReference>
<dbReference type="GO" id="GO:0016787">
    <property type="term" value="F:hydrolase activity"/>
    <property type="evidence" value="ECO:0007669"/>
    <property type="project" value="UniProtKB-KW"/>
</dbReference>
<dbReference type="GO" id="GO:0045227">
    <property type="term" value="P:capsule polysaccharide biosynthetic process"/>
    <property type="evidence" value="ECO:0007669"/>
    <property type="project" value="UniProtKB-UniPathway"/>
</dbReference>
<dbReference type="GO" id="GO:0071555">
    <property type="term" value="P:cell wall organization"/>
    <property type="evidence" value="ECO:0007669"/>
    <property type="project" value="UniProtKB-KW"/>
</dbReference>
<dbReference type="CDD" id="cd01610">
    <property type="entry name" value="PAP2_like"/>
    <property type="match status" value="1"/>
</dbReference>
<dbReference type="Gene3D" id="1.20.144.10">
    <property type="entry name" value="Phosphatidic acid phosphatase type 2/haloperoxidase"/>
    <property type="match status" value="1"/>
</dbReference>
<dbReference type="InterPro" id="IPR036938">
    <property type="entry name" value="P_Acid_Pase_2/haloperoxi_sf"/>
</dbReference>
<dbReference type="InterPro" id="IPR000326">
    <property type="entry name" value="P_Acid_Pase_2/haloperoxidase"/>
</dbReference>
<dbReference type="PANTHER" id="PTHR14969:SF62">
    <property type="entry name" value="DECAPRENYLPHOSPHORYL-5-PHOSPHORIBOSE PHOSPHATASE RV3807C-RELATED"/>
    <property type="match status" value="1"/>
</dbReference>
<dbReference type="PANTHER" id="PTHR14969">
    <property type="entry name" value="SPHINGOSINE-1-PHOSPHATE PHOSPHOHYDROLASE"/>
    <property type="match status" value="1"/>
</dbReference>
<dbReference type="Pfam" id="PF01569">
    <property type="entry name" value="PAP2"/>
    <property type="match status" value="1"/>
</dbReference>
<dbReference type="SMART" id="SM00014">
    <property type="entry name" value="acidPPc"/>
    <property type="match status" value="1"/>
</dbReference>
<dbReference type="SUPFAM" id="SSF48317">
    <property type="entry name" value="Acid phosphatase/Vanadium-dependent haloperoxidase"/>
    <property type="match status" value="1"/>
</dbReference>
<reference key="1">
    <citation type="journal article" date="1998" name="Nature">
        <title>Deciphering the biology of Mycobacterium tuberculosis from the complete genome sequence.</title>
        <authorList>
            <person name="Cole S.T."/>
            <person name="Brosch R."/>
            <person name="Parkhill J."/>
            <person name="Garnier T."/>
            <person name="Churcher C.M."/>
            <person name="Harris D.E."/>
            <person name="Gordon S.V."/>
            <person name="Eiglmeier K."/>
            <person name="Gas S."/>
            <person name="Barry C.E. III"/>
            <person name="Tekaia F."/>
            <person name="Badcock K."/>
            <person name="Basham D."/>
            <person name="Brown D."/>
            <person name="Chillingworth T."/>
            <person name="Connor R."/>
            <person name="Davies R.M."/>
            <person name="Devlin K."/>
            <person name="Feltwell T."/>
            <person name="Gentles S."/>
            <person name="Hamlin N."/>
            <person name="Holroyd S."/>
            <person name="Hornsby T."/>
            <person name="Jagels K."/>
            <person name="Krogh A."/>
            <person name="McLean J."/>
            <person name="Moule S."/>
            <person name="Murphy L.D."/>
            <person name="Oliver S."/>
            <person name="Osborne J."/>
            <person name="Quail M.A."/>
            <person name="Rajandream M.A."/>
            <person name="Rogers J."/>
            <person name="Rutter S."/>
            <person name="Seeger K."/>
            <person name="Skelton S."/>
            <person name="Squares S."/>
            <person name="Squares R."/>
            <person name="Sulston J.E."/>
            <person name="Taylor K."/>
            <person name="Whitehead S."/>
            <person name="Barrell B.G."/>
        </authorList>
    </citation>
    <scope>NUCLEOTIDE SEQUENCE [LARGE SCALE GENOMIC DNA]</scope>
    <source>
        <strain>ATCC 25618 / H37Rv</strain>
    </source>
</reference>
<reference key="2">
    <citation type="journal article" date="2022" name="Genomics">
        <title>Deep N-terminomics of Mycobacterium tuberculosis H37Rv extensively correct annotated encoding genes.</title>
        <authorList>
            <person name="Shi J."/>
            <person name="Meng S."/>
            <person name="Wan L."/>
            <person name="Zhang Z."/>
            <person name="Jiang S."/>
            <person name="Zhu H."/>
            <person name="Dai E."/>
            <person name="Chang L."/>
            <person name="Gao H."/>
            <person name="Wan K."/>
            <person name="Zhang L."/>
            <person name="Zhao X."/>
            <person name="Liu H."/>
            <person name="Lyu Z."/>
            <person name="Zhang Y."/>
            <person name="Xu P."/>
        </authorList>
    </citation>
    <scope>PROTEIN SEQUENCE OF 8-31</scope>
    <scope>SEQUENCE REVISION TO N-TERMINUS</scope>
    <source>
        <strain>H37Rv</strain>
    </source>
</reference>
<reference key="3">
    <citation type="journal article" date="2011" name="Mol. Cell. Proteomics">
        <title>Proteogenomic analysis of Mycobacterium tuberculosis by high resolution mass spectrometry.</title>
        <authorList>
            <person name="Kelkar D.S."/>
            <person name="Kumar D."/>
            <person name="Kumar P."/>
            <person name="Balakrishnan L."/>
            <person name="Muthusamy B."/>
            <person name="Yadav A.K."/>
            <person name="Shrivastava P."/>
            <person name="Marimuthu A."/>
            <person name="Anand S."/>
            <person name="Sundaram H."/>
            <person name="Kingsbury R."/>
            <person name="Harsha H.C."/>
            <person name="Nair B."/>
            <person name="Prasad T.S."/>
            <person name="Chauhan D.S."/>
            <person name="Katoch K."/>
            <person name="Katoch V.M."/>
            <person name="Kumar P."/>
            <person name="Chaerkady R."/>
            <person name="Ramachandran S."/>
            <person name="Dash D."/>
            <person name="Pandey A."/>
        </authorList>
    </citation>
    <scope>IDENTIFICATION BY MASS SPECTROMETRY [LARGE SCALE ANALYSIS]</scope>
    <source>
        <strain>ATCC 25618 / H37Rv</strain>
    </source>
</reference>
<reference key="4">
    <citation type="journal article" date="2014" name="Indian J. Microbiol.">
        <title>Prokaryotic Expression, Identification and Bioinformatics Analysis of the Mycobacterium tuberculosis Rv3807c Gene Encoding the Putative Enzyme Committed to Decaprenylphosphoryl-d-arabinose Synthesis.</title>
        <authorList>
            <person name="Cai L."/>
            <person name="Zhao X."/>
            <person name="Jiang T."/>
            <person name="Qiu J."/>
            <person name="Owusu L."/>
            <person name="Ma Y."/>
            <person name="Wang B."/>
            <person name="Xin Y."/>
        </authorList>
    </citation>
    <scope>EXPRESSION</scope>
    <scope>SUBCELLULAR LOCATION</scope>
    <source>
        <strain>H37Rv</strain>
    </source>
</reference>
<accession>P9WI53</accession>
<accession>F2GDG6</accession>
<accession>L0TGM5</accession>
<accession>O53584</accession>
<accession>Q7D4U5</accession>
<protein>
    <recommendedName>
        <fullName evidence="1">Decaprenylphosphoryl-5-phosphoribose phosphatase</fullName>
        <shortName evidence="1">DPPR phosphatase</shortName>
        <ecNumber evidence="1">3.1.3.111</ecNumber>
    </recommendedName>
    <alternativeName>
        <fullName evidence="5">Phospholipid phosphatase</fullName>
    </alternativeName>
</protein>
<proteinExistence type="evidence at protein level"/>
<name>DPRP_MYCTU</name>
<sequence>MAERAPRGEVAVMVAVQSALVDRPGMLATARGLSHFGEHCIGWLILALLGAIALPRRRREWLVAGAGAFVAHAIAVLIKRLVRRQRPDHPAIAVNVDTPSQLSFPSAHATSTTAAALLMGRATGLPLPVVLVPPMALSRILLGVHYPSDVAVGVALGATVGAIVDSVGGGRQRARKR</sequence>
<keyword id="KW-1003">Cell membrane</keyword>
<keyword id="KW-0961">Cell wall biogenesis/degradation</keyword>
<keyword id="KW-0903">Direct protein sequencing</keyword>
<keyword id="KW-0378">Hydrolase</keyword>
<keyword id="KW-0472">Membrane</keyword>
<keyword id="KW-1185">Reference proteome</keyword>
<keyword id="KW-0812">Transmembrane</keyword>
<keyword id="KW-1133">Transmembrane helix</keyword>
<comment type="function">
    <text evidence="1">Phosphatase involved in the biosynthesis of decaprenylphosphoryl arabinose (DPA), which serves as the arabinose donor for the biosynthesis of arabinogalactan, the major mycobacterial cell wall polysaccharide (By similarity). Catalyzes the dephosphorylation of decaprenylphosphoryl-5-phosphoribose (DPPR) to decaprenyl-phosphoribose (DPR) (By similarity).</text>
</comment>
<comment type="catalytic activity">
    <reaction evidence="1">
        <text>trans,octa-cis-decaprenylphospho-beta-D-ribofuranose 5-phosphate + H2O = trans,octa-cis-decaprenylphospho-beta-D-ribofuranose + phosphate</text>
        <dbReference type="Rhea" id="RHEA:80895"/>
        <dbReference type="ChEBI" id="CHEBI:15377"/>
        <dbReference type="ChEBI" id="CHEBI:43474"/>
        <dbReference type="ChEBI" id="CHEBI:66881"/>
        <dbReference type="ChEBI" id="CHEBI:66937"/>
        <dbReference type="EC" id="3.1.3.111"/>
    </reaction>
    <physiologicalReaction direction="left-to-right" evidence="1">
        <dbReference type="Rhea" id="RHEA:80896"/>
    </physiologicalReaction>
</comment>
<comment type="pathway">
    <text evidence="1">Cell wall biogenesis; cell wall polysaccharide biosynthesis.</text>
</comment>
<comment type="subcellular location">
    <subcellularLocation>
        <location evidence="3">Cell membrane</location>
        <topology evidence="2">Multi-pass membrane protein</topology>
    </subcellularLocation>
</comment>
<comment type="similarity">
    <text evidence="6">Belongs to the PA-phosphatase related phosphoesterase family.</text>
</comment>
<comment type="sequence caution" evidence="4">
    <conflict type="erroneous initiation">
        <sequence resource="EMBL-CDS" id="CCP46636"/>
    </conflict>
    <text>Truncated N-terminus.</text>
</comment>
<gene>
    <name type="ordered locus">Rv3807c</name>
</gene>